<gene>
    <name evidence="1" type="primary">tsf</name>
    <name type="ordered locus">VP2317</name>
</gene>
<comment type="function">
    <text evidence="1">Associates with the EF-Tu.GDP complex and induces the exchange of GDP to GTP. It remains bound to the aminoacyl-tRNA.EF-Tu.GTP complex up to the GTP hydrolysis stage on the ribosome.</text>
</comment>
<comment type="subcellular location">
    <subcellularLocation>
        <location evidence="1">Cytoplasm</location>
    </subcellularLocation>
</comment>
<comment type="similarity">
    <text evidence="1">Belongs to the EF-Ts family.</text>
</comment>
<reference key="1">
    <citation type="journal article" date="2003" name="Lancet">
        <title>Genome sequence of Vibrio parahaemolyticus: a pathogenic mechanism distinct from that of V. cholerae.</title>
        <authorList>
            <person name="Makino K."/>
            <person name="Oshima K."/>
            <person name="Kurokawa K."/>
            <person name="Yokoyama K."/>
            <person name="Uda T."/>
            <person name="Tagomori K."/>
            <person name="Iijima Y."/>
            <person name="Najima M."/>
            <person name="Nakano M."/>
            <person name="Yamashita A."/>
            <person name="Kubota Y."/>
            <person name="Kimura S."/>
            <person name="Yasunaga T."/>
            <person name="Honda T."/>
            <person name="Shinagawa H."/>
            <person name="Hattori M."/>
            <person name="Iida T."/>
        </authorList>
    </citation>
    <scope>NUCLEOTIDE SEQUENCE [LARGE SCALE GENOMIC DNA]</scope>
    <source>
        <strain>RIMD 2210633</strain>
    </source>
</reference>
<evidence type="ECO:0000255" key="1">
    <source>
        <dbReference type="HAMAP-Rule" id="MF_00050"/>
    </source>
</evidence>
<sequence length="281" mass="29774">MATVTAALVKELRERTGAGMMECKKALVEANADIELAIENMRKSGAAKAAKKAGNVAAEGAIIIKEENGSAVLLEVNCQTDFVAKDGNFTAFAQEVAAAALASKATVEELQAQFEEARVALVAKIGENINIRRVQYVEGTAIASYRHGEKIGVVVAGEGDAETLKHVAMHVAASKPEYVNPEDVPADVVAKEKEVQVEIAMNEGKPAEIAEKMVVGRMKKFTGEISLTGQAFIMEPKKTVGEMLKEKGASVATFVRLEVGEGIEKAEGLSFAEEVALAQKG</sequence>
<name>EFTS_VIBPA</name>
<feature type="chain" id="PRO_0000161230" description="Elongation factor Ts">
    <location>
        <begin position="1"/>
        <end position="281"/>
    </location>
</feature>
<feature type="region of interest" description="Involved in Mg(2+) ion dislocation from EF-Tu" evidence="1">
    <location>
        <begin position="80"/>
        <end position="83"/>
    </location>
</feature>
<organism>
    <name type="scientific">Vibrio parahaemolyticus serotype O3:K6 (strain RIMD 2210633)</name>
    <dbReference type="NCBI Taxonomy" id="223926"/>
    <lineage>
        <taxon>Bacteria</taxon>
        <taxon>Pseudomonadati</taxon>
        <taxon>Pseudomonadota</taxon>
        <taxon>Gammaproteobacteria</taxon>
        <taxon>Vibrionales</taxon>
        <taxon>Vibrionaceae</taxon>
        <taxon>Vibrio</taxon>
    </lineage>
</organism>
<accession>Q87MD9</accession>
<dbReference type="EMBL" id="BA000031">
    <property type="protein sequence ID" value="BAC60580.1"/>
    <property type="molecule type" value="Genomic_DNA"/>
</dbReference>
<dbReference type="RefSeq" id="NP_798696.1">
    <property type="nucleotide sequence ID" value="NC_004603.1"/>
</dbReference>
<dbReference type="RefSeq" id="WP_005456729.1">
    <property type="nucleotide sequence ID" value="NC_004603.1"/>
</dbReference>
<dbReference type="SMR" id="Q87MD9"/>
<dbReference type="GeneID" id="1189830"/>
<dbReference type="KEGG" id="vpa:VP2317"/>
<dbReference type="PATRIC" id="fig|223926.6.peg.2219"/>
<dbReference type="eggNOG" id="COG0264">
    <property type="taxonomic scope" value="Bacteria"/>
</dbReference>
<dbReference type="HOGENOM" id="CLU_047155_0_2_6"/>
<dbReference type="Proteomes" id="UP000002493">
    <property type="component" value="Chromosome 1"/>
</dbReference>
<dbReference type="GO" id="GO:0005737">
    <property type="term" value="C:cytoplasm"/>
    <property type="evidence" value="ECO:0007669"/>
    <property type="project" value="UniProtKB-SubCell"/>
</dbReference>
<dbReference type="GO" id="GO:0003746">
    <property type="term" value="F:translation elongation factor activity"/>
    <property type="evidence" value="ECO:0007669"/>
    <property type="project" value="UniProtKB-UniRule"/>
</dbReference>
<dbReference type="CDD" id="cd14275">
    <property type="entry name" value="UBA_EF-Ts"/>
    <property type="match status" value="1"/>
</dbReference>
<dbReference type="FunFam" id="1.10.286.20:FF:000001">
    <property type="entry name" value="Elongation factor Ts"/>
    <property type="match status" value="1"/>
</dbReference>
<dbReference type="FunFam" id="1.10.8.10:FF:000001">
    <property type="entry name" value="Elongation factor Ts"/>
    <property type="match status" value="1"/>
</dbReference>
<dbReference type="FunFam" id="3.30.479.20:FF:000001">
    <property type="entry name" value="Elongation factor Ts"/>
    <property type="match status" value="1"/>
</dbReference>
<dbReference type="Gene3D" id="1.10.286.20">
    <property type="match status" value="1"/>
</dbReference>
<dbReference type="Gene3D" id="1.10.8.10">
    <property type="entry name" value="DNA helicase RuvA subunit, C-terminal domain"/>
    <property type="match status" value="1"/>
</dbReference>
<dbReference type="Gene3D" id="3.30.479.20">
    <property type="entry name" value="Elongation factor Ts, dimerisation domain"/>
    <property type="match status" value="2"/>
</dbReference>
<dbReference type="HAMAP" id="MF_00050">
    <property type="entry name" value="EF_Ts"/>
    <property type="match status" value="1"/>
</dbReference>
<dbReference type="InterPro" id="IPR036402">
    <property type="entry name" value="EF-Ts_dimer_sf"/>
</dbReference>
<dbReference type="InterPro" id="IPR001816">
    <property type="entry name" value="Transl_elong_EFTs/EF1B"/>
</dbReference>
<dbReference type="InterPro" id="IPR014039">
    <property type="entry name" value="Transl_elong_EFTs/EF1B_dimer"/>
</dbReference>
<dbReference type="InterPro" id="IPR018101">
    <property type="entry name" value="Transl_elong_Ts_CS"/>
</dbReference>
<dbReference type="InterPro" id="IPR009060">
    <property type="entry name" value="UBA-like_sf"/>
</dbReference>
<dbReference type="NCBIfam" id="TIGR00116">
    <property type="entry name" value="tsf"/>
    <property type="match status" value="1"/>
</dbReference>
<dbReference type="PANTHER" id="PTHR11741">
    <property type="entry name" value="ELONGATION FACTOR TS"/>
    <property type="match status" value="1"/>
</dbReference>
<dbReference type="PANTHER" id="PTHR11741:SF0">
    <property type="entry name" value="ELONGATION FACTOR TS, MITOCHONDRIAL"/>
    <property type="match status" value="1"/>
</dbReference>
<dbReference type="Pfam" id="PF00889">
    <property type="entry name" value="EF_TS"/>
    <property type="match status" value="1"/>
</dbReference>
<dbReference type="SUPFAM" id="SSF54713">
    <property type="entry name" value="Elongation factor Ts (EF-Ts), dimerisation domain"/>
    <property type="match status" value="2"/>
</dbReference>
<dbReference type="SUPFAM" id="SSF46934">
    <property type="entry name" value="UBA-like"/>
    <property type="match status" value="1"/>
</dbReference>
<dbReference type="PROSITE" id="PS01126">
    <property type="entry name" value="EF_TS_1"/>
    <property type="match status" value="1"/>
</dbReference>
<dbReference type="PROSITE" id="PS01127">
    <property type="entry name" value="EF_TS_2"/>
    <property type="match status" value="1"/>
</dbReference>
<keyword id="KW-0963">Cytoplasm</keyword>
<keyword id="KW-0251">Elongation factor</keyword>
<keyword id="KW-0648">Protein biosynthesis</keyword>
<proteinExistence type="inferred from homology"/>
<protein>
    <recommendedName>
        <fullName evidence="1">Elongation factor Ts</fullName>
        <shortName evidence="1">EF-Ts</shortName>
    </recommendedName>
</protein>